<protein>
    <recommendedName>
        <fullName evidence="1">Protoheme IX farnesyltransferase</fullName>
        <ecNumber evidence="1">2.5.1.141</ecNumber>
    </recommendedName>
    <alternativeName>
        <fullName evidence="1">Heme B farnesyltransferase</fullName>
    </alternativeName>
    <alternativeName>
        <fullName evidence="1">Heme O synthase</fullName>
    </alternativeName>
</protein>
<comment type="function">
    <text evidence="1">Converts heme B (protoheme IX) to heme O by substitution of the vinyl group on carbon 2 of heme B porphyrin ring with a hydroxyethyl farnesyl side group.</text>
</comment>
<comment type="catalytic activity">
    <reaction evidence="1">
        <text>heme b + (2E,6E)-farnesyl diphosphate + H2O = Fe(II)-heme o + diphosphate</text>
        <dbReference type="Rhea" id="RHEA:28070"/>
        <dbReference type="ChEBI" id="CHEBI:15377"/>
        <dbReference type="ChEBI" id="CHEBI:33019"/>
        <dbReference type="ChEBI" id="CHEBI:60344"/>
        <dbReference type="ChEBI" id="CHEBI:60530"/>
        <dbReference type="ChEBI" id="CHEBI:175763"/>
        <dbReference type="EC" id="2.5.1.141"/>
    </reaction>
</comment>
<comment type="pathway">
    <text evidence="1">Porphyrin-containing compound metabolism; heme O biosynthesis; heme O from protoheme: step 1/1.</text>
</comment>
<comment type="subcellular location">
    <subcellularLocation>
        <location evidence="1">Cell inner membrane</location>
        <topology evidence="1">Multi-pass membrane protein</topology>
    </subcellularLocation>
</comment>
<comment type="miscellaneous">
    <text evidence="1">Carbon 2 of the heme B porphyrin ring is defined according to the Fischer nomenclature.</text>
</comment>
<comment type="similarity">
    <text evidence="1">Belongs to the UbiA prenyltransferase family. Protoheme IX farnesyltransferase subfamily.</text>
</comment>
<sequence length="297" mass="33163">MFSNYRQYWDLTKPKVVALIVFTALVGMVLAIPGVPSWEQVRAGVLGFLGIWLAASAAAAINQLLDAHIDAQMARTSWRPLVVGKVKPWQVLVFASVLIVLSMVILVLWVNLITAVLTFASLIGYAVIYTVYLKRATSQNIVIGGLAGAMPPMLGWAAVTGMQGSSDWAYSSLLVLIIFIWTPPHFWALAIFRREDYAKAEIPMLPVTHGVVHTRKQIMVYSVVLALVCLLPYLVGMSGAFYLGGAIVLNAVFLWYAWRMLDPPDELFSMKMFYYSIVYLMALFAFLLVDHWILPWL</sequence>
<proteinExistence type="inferred from homology"/>
<evidence type="ECO:0000255" key="1">
    <source>
        <dbReference type="HAMAP-Rule" id="MF_00154"/>
    </source>
</evidence>
<feature type="chain" id="PRO_1000096927" description="Protoheme IX farnesyltransferase">
    <location>
        <begin position="1"/>
        <end position="297"/>
    </location>
</feature>
<feature type="transmembrane region" description="Helical" evidence="1">
    <location>
        <begin position="16"/>
        <end position="36"/>
    </location>
</feature>
<feature type="transmembrane region" description="Helical" evidence="1">
    <location>
        <begin position="45"/>
        <end position="65"/>
    </location>
</feature>
<feature type="transmembrane region" description="Helical" evidence="1">
    <location>
        <begin position="93"/>
        <end position="113"/>
    </location>
</feature>
<feature type="transmembrane region" description="Helical" evidence="1">
    <location>
        <begin position="114"/>
        <end position="134"/>
    </location>
</feature>
<feature type="transmembrane region" description="Helical" evidence="1">
    <location>
        <begin position="141"/>
        <end position="161"/>
    </location>
</feature>
<feature type="transmembrane region" description="Helical" evidence="1">
    <location>
        <begin position="172"/>
        <end position="192"/>
    </location>
</feature>
<feature type="transmembrane region" description="Helical" evidence="1">
    <location>
        <begin position="223"/>
        <end position="243"/>
    </location>
</feature>
<feature type="transmembrane region" description="Helical" evidence="1">
    <location>
        <begin position="244"/>
        <end position="264"/>
    </location>
</feature>
<feature type="transmembrane region" description="Helical" evidence="1">
    <location>
        <begin position="277"/>
        <end position="297"/>
    </location>
</feature>
<dbReference type="EC" id="2.5.1.141" evidence="1"/>
<dbReference type="EMBL" id="CP001111">
    <property type="protein sequence ID" value="ACF50024.1"/>
    <property type="molecule type" value="Genomic_DNA"/>
</dbReference>
<dbReference type="RefSeq" id="WP_004138490.1">
    <property type="nucleotide sequence ID" value="NC_011071.1"/>
</dbReference>
<dbReference type="SMR" id="B4SHI1"/>
<dbReference type="STRING" id="391008.Smal_0319"/>
<dbReference type="KEGG" id="smt:Smal_0319"/>
<dbReference type="eggNOG" id="COG0109">
    <property type="taxonomic scope" value="Bacteria"/>
</dbReference>
<dbReference type="HOGENOM" id="CLU_029631_0_2_6"/>
<dbReference type="OrthoDB" id="9814417at2"/>
<dbReference type="UniPathway" id="UPA00834">
    <property type="reaction ID" value="UER00712"/>
</dbReference>
<dbReference type="Proteomes" id="UP000001867">
    <property type="component" value="Chromosome"/>
</dbReference>
<dbReference type="GO" id="GO:0005886">
    <property type="term" value="C:plasma membrane"/>
    <property type="evidence" value="ECO:0007669"/>
    <property type="project" value="UniProtKB-SubCell"/>
</dbReference>
<dbReference type="GO" id="GO:0008495">
    <property type="term" value="F:protoheme IX farnesyltransferase activity"/>
    <property type="evidence" value="ECO:0007669"/>
    <property type="project" value="UniProtKB-UniRule"/>
</dbReference>
<dbReference type="GO" id="GO:0048034">
    <property type="term" value="P:heme O biosynthetic process"/>
    <property type="evidence" value="ECO:0007669"/>
    <property type="project" value="UniProtKB-UniRule"/>
</dbReference>
<dbReference type="CDD" id="cd13957">
    <property type="entry name" value="PT_UbiA_Cox10"/>
    <property type="match status" value="1"/>
</dbReference>
<dbReference type="FunFam" id="1.10.357.140:FF:000001">
    <property type="entry name" value="Protoheme IX farnesyltransferase"/>
    <property type="match status" value="1"/>
</dbReference>
<dbReference type="Gene3D" id="1.10.357.140">
    <property type="entry name" value="UbiA prenyltransferase"/>
    <property type="match status" value="1"/>
</dbReference>
<dbReference type="HAMAP" id="MF_00154">
    <property type="entry name" value="CyoE_CtaB"/>
    <property type="match status" value="1"/>
</dbReference>
<dbReference type="InterPro" id="IPR006369">
    <property type="entry name" value="Protohaem_IX_farnesylTrfase"/>
</dbReference>
<dbReference type="InterPro" id="IPR000537">
    <property type="entry name" value="UbiA_prenyltransferase"/>
</dbReference>
<dbReference type="InterPro" id="IPR030470">
    <property type="entry name" value="UbiA_prenylTrfase_CS"/>
</dbReference>
<dbReference type="InterPro" id="IPR044878">
    <property type="entry name" value="UbiA_sf"/>
</dbReference>
<dbReference type="NCBIfam" id="TIGR01473">
    <property type="entry name" value="cyoE_ctaB"/>
    <property type="match status" value="1"/>
</dbReference>
<dbReference type="NCBIfam" id="NF003349">
    <property type="entry name" value="PRK04375.1-2"/>
    <property type="match status" value="1"/>
</dbReference>
<dbReference type="PANTHER" id="PTHR43448:SF7">
    <property type="entry name" value="4-HYDROXYBENZOATE SOLANESYLTRANSFERASE"/>
    <property type="match status" value="1"/>
</dbReference>
<dbReference type="PANTHER" id="PTHR43448">
    <property type="entry name" value="PROTOHEME IX FARNESYLTRANSFERASE, MITOCHONDRIAL"/>
    <property type="match status" value="1"/>
</dbReference>
<dbReference type="Pfam" id="PF01040">
    <property type="entry name" value="UbiA"/>
    <property type="match status" value="1"/>
</dbReference>
<dbReference type="PROSITE" id="PS00943">
    <property type="entry name" value="UBIA"/>
    <property type="match status" value="1"/>
</dbReference>
<name>CYOE_STRM5</name>
<gene>
    <name evidence="1" type="primary">cyoE</name>
    <name type="ordered locus">Smal_0319</name>
</gene>
<keyword id="KW-0997">Cell inner membrane</keyword>
<keyword id="KW-1003">Cell membrane</keyword>
<keyword id="KW-0350">Heme biosynthesis</keyword>
<keyword id="KW-0472">Membrane</keyword>
<keyword id="KW-0808">Transferase</keyword>
<keyword id="KW-0812">Transmembrane</keyword>
<keyword id="KW-1133">Transmembrane helix</keyword>
<reference key="1">
    <citation type="submission" date="2008-06" db="EMBL/GenBank/DDBJ databases">
        <title>Complete sequence of Stenotrophomonas maltophilia R551-3.</title>
        <authorList>
            <consortium name="US DOE Joint Genome Institute"/>
            <person name="Lucas S."/>
            <person name="Copeland A."/>
            <person name="Lapidus A."/>
            <person name="Glavina del Rio T."/>
            <person name="Dalin E."/>
            <person name="Tice H."/>
            <person name="Pitluck S."/>
            <person name="Chain P."/>
            <person name="Malfatti S."/>
            <person name="Shin M."/>
            <person name="Vergez L."/>
            <person name="Lang D."/>
            <person name="Schmutz J."/>
            <person name="Larimer F."/>
            <person name="Land M."/>
            <person name="Hauser L."/>
            <person name="Kyrpides N."/>
            <person name="Mikhailova N."/>
            <person name="Taghavi S."/>
            <person name="Monchy S."/>
            <person name="Newman L."/>
            <person name="Vangronsveld J."/>
            <person name="van der Lelie D."/>
            <person name="Richardson P."/>
        </authorList>
    </citation>
    <scope>NUCLEOTIDE SEQUENCE [LARGE SCALE GENOMIC DNA]</scope>
    <source>
        <strain>R551-3</strain>
    </source>
</reference>
<accession>B4SHI1</accession>
<organism>
    <name type="scientific">Stenotrophomonas maltophilia (strain R551-3)</name>
    <dbReference type="NCBI Taxonomy" id="391008"/>
    <lineage>
        <taxon>Bacteria</taxon>
        <taxon>Pseudomonadati</taxon>
        <taxon>Pseudomonadota</taxon>
        <taxon>Gammaproteobacteria</taxon>
        <taxon>Lysobacterales</taxon>
        <taxon>Lysobacteraceae</taxon>
        <taxon>Stenotrophomonas</taxon>
        <taxon>Stenotrophomonas maltophilia group</taxon>
    </lineage>
</organism>